<reference key="1">
    <citation type="submission" date="2006-12" db="EMBL/GenBank/DDBJ databases">
        <title>Complete sequence of chromosome 1 of Nocardioides sp. JS614.</title>
        <authorList>
            <person name="Copeland A."/>
            <person name="Lucas S."/>
            <person name="Lapidus A."/>
            <person name="Barry K."/>
            <person name="Detter J.C."/>
            <person name="Glavina del Rio T."/>
            <person name="Hammon N."/>
            <person name="Israni S."/>
            <person name="Dalin E."/>
            <person name="Tice H."/>
            <person name="Pitluck S."/>
            <person name="Thompson L.S."/>
            <person name="Brettin T."/>
            <person name="Bruce D."/>
            <person name="Han C."/>
            <person name="Tapia R."/>
            <person name="Schmutz J."/>
            <person name="Larimer F."/>
            <person name="Land M."/>
            <person name="Hauser L."/>
            <person name="Kyrpides N."/>
            <person name="Kim E."/>
            <person name="Mattes T."/>
            <person name="Gossett J."/>
            <person name="Richardson P."/>
        </authorList>
    </citation>
    <scope>NUCLEOTIDE SEQUENCE [LARGE SCALE GENOMIC DNA]</scope>
    <source>
        <strain>ATCC BAA-499 / JS614</strain>
    </source>
</reference>
<protein>
    <recommendedName>
        <fullName evidence="1">Homoserine O-succinyltransferase</fullName>
        <shortName evidence="1">HST</shortName>
        <ecNumber evidence="1">2.3.1.46</ecNumber>
    </recommendedName>
    <alternativeName>
        <fullName evidence="1">Homoserine transsuccinylase</fullName>
        <shortName evidence="1">HTS</shortName>
    </alternativeName>
</protein>
<organism>
    <name type="scientific">Nocardioides sp. (strain ATCC BAA-499 / JS614)</name>
    <dbReference type="NCBI Taxonomy" id="196162"/>
    <lineage>
        <taxon>Bacteria</taxon>
        <taxon>Bacillati</taxon>
        <taxon>Actinomycetota</taxon>
        <taxon>Actinomycetes</taxon>
        <taxon>Propionibacteriales</taxon>
        <taxon>Nocardioidaceae</taxon>
        <taxon>Nocardioides</taxon>
    </lineage>
</organism>
<sequence>MTGSLGYVETQRVVLAGPDDPLHLRGGGRLDHVEVAYETYGSLSPARDNAVFICHALTGDAHAAGLHVGSKKRGWWDNLIGPGKPVDTDRFFVISANLLGGCSGSTGPLSTDPATGAPYCLDFPMLHMSDLVAAHRRLVAHLGIERLHAAVGGSLGGMQVLQWVIDEPDALERAVLVAASSRLSPENIAFSAIGREAIMSDPDFCNGRYVEQGVFPWRGQKVARMMAHITYVSAQSLETKFGHRRRSRGDAWTLGPDYEVEHYLQHQGQVFLGRFDALSYLYLTRLLDYFDPFADPGTAAALRSTATRFQLTSFDSDWRFDSTQSARMTAELKALGVAVDWAELASPFGHDSFLLQPPGYHERIAEFLG</sequence>
<name>METXS_NOCSJ</name>
<gene>
    <name evidence="1" type="primary">metXS</name>
    <name type="ordered locus">Noca_3630</name>
</gene>
<feature type="chain" id="PRO_1000115231" description="Homoserine O-succinyltransferase">
    <location>
        <begin position="1"/>
        <end position="369"/>
    </location>
</feature>
<feature type="domain" description="AB hydrolase-1" evidence="1">
    <location>
        <begin position="49"/>
        <end position="328"/>
    </location>
</feature>
<feature type="active site" description="Nucleophile" evidence="1">
    <location>
        <position position="154"/>
    </location>
</feature>
<feature type="active site" evidence="1">
    <location>
        <position position="317"/>
    </location>
</feature>
<feature type="active site" evidence="1">
    <location>
        <position position="350"/>
    </location>
</feature>
<feature type="binding site" evidence="1">
    <location>
        <position position="224"/>
    </location>
    <ligand>
        <name>substrate</name>
    </ligand>
</feature>
<feature type="binding site" evidence="1">
    <location>
        <position position="351"/>
    </location>
    <ligand>
        <name>substrate</name>
    </ligand>
</feature>
<feature type="site" description="Important for acyl-CoA specificity" evidence="1">
    <location>
        <position position="319"/>
    </location>
</feature>
<comment type="function">
    <text evidence="1">Transfers a succinyl group from succinyl-CoA to L-homoserine, forming succinyl-L-homoserine.</text>
</comment>
<comment type="catalytic activity">
    <reaction evidence="1">
        <text>L-homoserine + succinyl-CoA = O-succinyl-L-homoserine + CoA</text>
        <dbReference type="Rhea" id="RHEA:22008"/>
        <dbReference type="ChEBI" id="CHEBI:57287"/>
        <dbReference type="ChEBI" id="CHEBI:57292"/>
        <dbReference type="ChEBI" id="CHEBI:57476"/>
        <dbReference type="ChEBI" id="CHEBI:57661"/>
        <dbReference type="EC" id="2.3.1.46"/>
    </reaction>
</comment>
<comment type="pathway">
    <text evidence="1">Amino-acid biosynthesis; L-methionine biosynthesis via de novo pathway; O-succinyl-L-homoserine from L-homoserine: step 1/1.</text>
</comment>
<comment type="subunit">
    <text evidence="1">Homodimer.</text>
</comment>
<comment type="subcellular location">
    <subcellularLocation>
        <location evidence="1">Cytoplasm</location>
    </subcellularLocation>
</comment>
<comment type="similarity">
    <text evidence="1">Belongs to the AB hydrolase superfamily. MetX family.</text>
</comment>
<proteinExistence type="inferred from homology"/>
<keyword id="KW-0012">Acyltransferase</keyword>
<keyword id="KW-0028">Amino-acid biosynthesis</keyword>
<keyword id="KW-0963">Cytoplasm</keyword>
<keyword id="KW-0486">Methionine biosynthesis</keyword>
<keyword id="KW-1185">Reference proteome</keyword>
<keyword id="KW-0808">Transferase</keyword>
<accession>A1SMU5</accession>
<evidence type="ECO:0000255" key="1">
    <source>
        <dbReference type="HAMAP-Rule" id="MF_00296"/>
    </source>
</evidence>
<dbReference type="EC" id="2.3.1.46" evidence="1"/>
<dbReference type="EMBL" id="CP000509">
    <property type="protein sequence ID" value="ABL83130.1"/>
    <property type="molecule type" value="Genomic_DNA"/>
</dbReference>
<dbReference type="SMR" id="A1SMU5"/>
<dbReference type="STRING" id="196162.Noca_3630"/>
<dbReference type="ESTHER" id="nocsj-metx">
    <property type="family name" value="Homoserine_transacetylase"/>
</dbReference>
<dbReference type="KEGG" id="nca:Noca_3630"/>
<dbReference type="eggNOG" id="COG2021">
    <property type="taxonomic scope" value="Bacteria"/>
</dbReference>
<dbReference type="HOGENOM" id="CLU_028760_1_2_11"/>
<dbReference type="OrthoDB" id="9800754at2"/>
<dbReference type="UniPathway" id="UPA00051">
    <property type="reaction ID" value="UER00075"/>
</dbReference>
<dbReference type="Proteomes" id="UP000000640">
    <property type="component" value="Chromosome"/>
</dbReference>
<dbReference type="GO" id="GO:0005737">
    <property type="term" value="C:cytoplasm"/>
    <property type="evidence" value="ECO:0007669"/>
    <property type="project" value="UniProtKB-SubCell"/>
</dbReference>
<dbReference type="GO" id="GO:0004414">
    <property type="term" value="F:homoserine O-acetyltransferase activity"/>
    <property type="evidence" value="ECO:0007669"/>
    <property type="project" value="TreeGrafter"/>
</dbReference>
<dbReference type="GO" id="GO:0008899">
    <property type="term" value="F:homoserine O-succinyltransferase activity"/>
    <property type="evidence" value="ECO:0007669"/>
    <property type="project" value="UniProtKB-UniRule"/>
</dbReference>
<dbReference type="GO" id="GO:0009092">
    <property type="term" value="P:homoserine metabolic process"/>
    <property type="evidence" value="ECO:0007669"/>
    <property type="project" value="TreeGrafter"/>
</dbReference>
<dbReference type="GO" id="GO:0009086">
    <property type="term" value="P:methionine biosynthetic process"/>
    <property type="evidence" value="ECO:0007669"/>
    <property type="project" value="UniProtKB-UniRule"/>
</dbReference>
<dbReference type="Gene3D" id="1.10.1740.110">
    <property type="match status" value="1"/>
</dbReference>
<dbReference type="Gene3D" id="3.40.50.1820">
    <property type="entry name" value="alpha/beta hydrolase"/>
    <property type="match status" value="1"/>
</dbReference>
<dbReference type="HAMAP" id="MF_00296">
    <property type="entry name" value="MetX_acyltransf"/>
    <property type="match status" value="1"/>
</dbReference>
<dbReference type="InterPro" id="IPR000073">
    <property type="entry name" value="AB_hydrolase_1"/>
</dbReference>
<dbReference type="InterPro" id="IPR029058">
    <property type="entry name" value="AB_hydrolase_fold"/>
</dbReference>
<dbReference type="InterPro" id="IPR008220">
    <property type="entry name" value="HAT_MetX-like"/>
</dbReference>
<dbReference type="NCBIfam" id="TIGR01392">
    <property type="entry name" value="homoserO_Ac_trn"/>
    <property type="match status" value="1"/>
</dbReference>
<dbReference type="NCBIfam" id="NF001209">
    <property type="entry name" value="PRK00175.1"/>
    <property type="match status" value="1"/>
</dbReference>
<dbReference type="PANTHER" id="PTHR32268">
    <property type="entry name" value="HOMOSERINE O-ACETYLTRANSFERASE"/>
    <property type="match status" value="1"/>
</dbReference>
<dbReference type="PANTHER" id="PTHR32268:SF11">
    <property type="entry name" value="HOMOSERINE O-ACETYLTRANSFERASE"/>
    <property type="match status" value="1"/>
</dbReference>
<dbReference type="Pfam" id="PF00561">
    <property type="entry name" value="Abhydrolase_1"/>
    <property type="match status" value="1"/>
</dbReference>
<dbReference type="PIRSF" id="PIRSF000443">
    <property type="entry name" value="Homoser_Ac_trans"/>
    <property type="match status" value="1"/>
</dbReference>
<dbReference type="SUPFAM" id="SSF53474">
    <property type="entry name" value="alpha/beta-Hydrolases"/>
    <property type="match status" value="1"/>
</dbReference>